<protein>
    <recommendedName>
        <fullName evidence="1">Sugar fermentation stimulation protein A</fullName>
    </recommendedName>
</protein>
<accession>Q32JW1</accession>
<proteinExistence type="inferred from homology"/>
<keyword id="KW-0238">DNA-binding</keyword>
<keyword id="KW-1185">Reference proteome</keyword>
<gene>
    <name evidence="1" type="primary">sfsA</name>
    <name type="ordered locus">SDY_0162</name>
</gene>
<reference key="1">
    <citation type="journal article" date="2005" name="Nucleic Acids Res.">
        <title>Genome dynamics and diversity of Shigella species, the etiologic agents of bacillary dysentery.</title>
        <authorList>
            <person name="Yang F."/>
            <person name="Yang J."/>
            <person name="Zhang X."/>
            <person name="Chen L."/>
            <person name="Jiang Y."/>
            <person name="Yan Y."/>
            <person name="Tang X."/>
            <person name="Wang J."/>
            <person name="Xiong Z."/>
            <person name="Dong J."/>
            <person name="Xue Y."/>
            <person name="Zhu Y."/>
            <person name="Xu X."/>
            <person name="Sun L."/>
            <person name="Chen S."/>
            <person name="Nie H."/>
            <person name="Peng J."/>
            <person name="Xu J."/>
            <person name="Wang Y."/>
            <person name="Yuan Z."/>
            <person name="Wen Y."/>
            <person name="Yao Z."/>
            <person name="Shen Y."/>
            <person name="Qiang B."/>
            <person name="Hou Y."/>
            <person name="Yu J."/>
            <person name="Jin Q."/>
        </authorList>
    </citation>
    <scope>NUCLEOTIDE SEQUENCE [LARGE SCALE GENOMIC DNA]</scope>
    <source>
        <strain>Sd197</strain>
    </source>
</reference>
<comment type="function">
    <text evidence="1">Binds to DNA non-specifically. Could be a regulatory factor involved in maltose metabolism.</text>
</comment>
<comment type="similarity">
    <text evidence="1">Belongs to the SfsA family.</text>
</comment>
<organism>
    <name type="scientific">Shigella dysenteriae serotype 1 (strain Sd197)</name>
    <dbReference type="NCBI Taxonomy" id="300267"/>
    <lineage>
        <taxon>Bacteria</taxon>
        <taxon>Pseudomonadati</taxon>
        <taxon>Pseudomonadota</taxon>
        <taxon>Gammaproteobacteria</taxon>
        <taxon>Enterobacterales</taxon>
        <taxon>Enterobacteriaceae</taxon>
        <taxon>Shigella</taxon>
    </lineage>
</organism>
<sequence length="234" mass="26186">MEFSPPLQLATLIQRYKRFLADVITPDGRELTLHCPNTGAMTGCATPGDTVWYSTSDNTKRKYPHTWELTQSQSGAFICVNTLWANRLTKEAILNESISELSGYSSLKSEVKYGAERSRIDFMLQADSRPDCYIEVKSVTLAENEQGYFPDAVTERGQKHLRELMSVAAEGQRAVIFFAVLHSAITRFSPARHIDEKYAQLLSEAQQRGVEILAYKAEISAEGMALKKSLPVTL</sequence>
<dbReference type="EMBL" id="CP000034">
    <property type="protein sequence ID" value="ABB60396.1"/>
    <property type="molecule type" value="Genomic_DNA"/>
</dbReference>
<dbReference type="RefSeq" id="WP_000396021.1">
    <property type="nucleotide sequence ID" value="NC_007606.1"/>
</dbReference>
<dbReference type="RefSeq" id="YP_401885.1">
    <property type="nucleotide sequence ID" value="NC_007606.1"/>
</dbReference>
<dbReference type="SMR" id="Q32JW1"/>
<dbReference type="STRING" id="300267.SDY_0162"/>
<dbReference type="EnsemblBacteria" id="ABB60396">
    <property type="protein sequence ID" value="ABB60396"/>
    <property type="gene ID" value="SDY_0162"/>
</dbReference>
<dbReference type="KEGG" id="sdy:SDY_0162"/>
<dbReference type="PATRIC" id="fig|300267.13.peg.185"/>
<dbReference type="HOGENOM" id="CLU_052299_2_0_6"/>
<dbReference type="Proteomes" id="UP000002716">
    <property type="component" value="Chromosome"/>
</dbReference>
<dbReference type="GO" id="GO:0003677">
    <property type="term" value="F:DNA binding"/>
    <property type="evidence" value="ECO:0007669"/>
    <property type="project" value="UniProtKB-KW"/>
</dbReference>
<dbReference type="CDD" id="cd22359">
    <property type="entry name" value="SfsA-like_bacterial"/>
    <property type="match status" value="1"/>
</dbReference>
<dbReference type="FunFam" id="2.40.50.580:FF:000001">
    <property type="entry name" value="Sugar fermentation stimulation protein A"/>
    <property type="match status" value="1"/>
</dbReference>
<dbReference type="FunFam" id="3.40.1350.60:FF:000001">
    <property type="entry name" value="Sugar fermentation stimulation protein A"/>
    <property type="match status" value="1"/>
</dbReference>
<dbReference type="Gene3D" id="2.40.50.580">
    <property type="match status" value="1"/>
</dbReference>
<dbReference type="Gene3D" id="3.40.1350.60">
    <property type="match status" value="1"/>
</dbReference>
<dbReference type="HAMAP" id="MF_00095">
    <property type="entry name" value="SfsA"/>
    <property type="match status" value="1"/>
</dbReference>
<dbReference type="InterPro" id="IPR005224">
    <property type="entry name" value="SfsA"/>
</dbReference>
<dbReference type="InterPro" id="IPR040452">
    <property type="entry name" value="SfsA_C"/>
</dbReference>
<dbReference type="InterPro" id="IPR041465">
    <property type="entry name" value="SfsA_N"/>
</dbReference>
<dbReference type="NCBIfam" id="TIGR00230">
    <property type="entry name" value="sfsA"/>
    <property type="match status" value="1"/>
</dbReference>
<dbReference type="PANTHER" id="PTHR30545">
    <property type="entry name" value="SUGAR FERMENTATION STIMULATION PROTEIN A"/>
    <property type="match status" value="1"/>
</dbReference>
<dbReference type="PANTHER" id="PTHR30545:SF2">
    <property type="entry name" value="SUGAR FERMENTATION STIMULATION PROTEIN A"/>
    <property type="match status" value="1"/>
</dbReference>
<dbReference type="Pfam" id="PF03749">
    <property type="entry name" value="SfsA"/>
    <property type="match status" value="1"/>
</dbReference>
<dbReference type="Pfam" id="PF17746">
    <property type="entry name" value="SfsA_N"/>
    <property type="match status" value="1"/>
</dbReference>
<evidence type="ECO:0000255" key="1">
    <source>
        <dbReference type="HAMAP-Rule" id="MF_00095"/>
    </source>
</evidence>
<feature type="chain" id="PRO_1000008033" description="Sugar fermentation stimulation protein A">
    <location>
        <begin position="1"/>
        <end position="234"/>
    </location>
</feature>
<feature type="DNA-binding region" description="H-T-H motif" evidence="1">
    <location>
        <begin position="201"/>
        <end position="220"/>
    </location>
</feature>
<name>SFSA_SHIDS</name>